<comment type="function">
    <text evidence="1">Involved in unsaturated fatty acids biosynthesis. Catalyzes the dehydration of short chain beta-hydroxyacyl-ACPs and long chain saturated and unsaturated beta-hydroxyacyl-ACPs.</text>
</comment>
<comment type="catalytic activity">
    <reaction evidence="1">
        <text>a (3R)-hydroxyacyl-[ACP] = a (2E)-enoyl-[ACP] + H2O</text>
        <dbReference type="Rhea" id="RHEA:13097"/>
        <dbReference type="Rhea" id="RHEA-COMP:9925"/>
        <dbReference type="Rhea" id="RHEA-COMP:9945"/>
        <dbReference type="ChEBI" id="CHEBI:15377"/>
        <dbReference type="ChEBI" id="CHEBI:78784"/>
        <dbReference type="ChEBI" id="CHEBI:78827"/>
        <dbReference type="EC" id="4.2.1.59"/>
    </reaction>
</comment>
<comment type="subcellular location">
    <subcellularLocation>
        <location evidence="1">Cytoplasm</location>
    </subcellularLocation>
</comment>
<comment type="similarity">
    <text evidence="1">Belongs to the thioester dehydratase family. FabZ subfamily.</text>
</comment>
<evidence type="ECO:0000255" key="1">
    <source>
        <dbReference type="HAMAP-Rule" id="MF_00406"/>
    </source>
</evidence>
<name>FABZ_ANADF</name>
<keyword id="KW-0963">Cytoplasm</keyword>
<keyword id="KW-0441">Lipid A biosynthesis</keyword>
<keyword id="KW-0444">Lipid biosynthesis</keyword>
<keyword id="KW-0443">Lipid metabolism</keyword>
<keyword id="KW-0456">Lyase</keyword>
<keyword id="KW-1185">Reference proteome</keyword>
<reference key="1">
    <citation type="journal article" date="2015" name="Genome Announc.">
        <title>Complete genome sequence of Anaeromyxobacter sp. Fw109-5, an anaerobic, metal-reducing bacterium isolated from a contaminated subsurface environment.</title>
        <authorList>
            <person name="Hwang C."/>
            <person name="Copeland A."/>
            <person name="Lucas S."/>
            <person name="Lapidus A."/>
            <person name="Barry K."/>
            <person name="Glavina Del Rio T."/>
            <person name="Dalin E."/>
            <person name="Tice H."/>
            <person name="Pitluck S."/>
            <person name="Sims D."/>
            <person name="Brettin T."/>
            <person name="Bruce D.C."/>
            <person name="Detter J.C."/>
            <person name="Han C.S."/>
            <person name="Schmutz J."/>
            <person name="Larimer F.W."/>
            <person name="Land M.L."/>
            <person name="Hauser L.J."/>
            <person name="Kyrpides N."/>
            <person name="Lykidis A."/>
            <person name="Richardson P."/>
            <person name="Belieav A."/>
            <person name="Sanford R.A."/>
            <person name="Loeffler F.E."/>
            <person name="Fields M.W."/>
        </authorList>
    </citation>
    <scope>NUCLEOTIDE SEQUENCE [LARGE SCALE GENOMIC DNA]</scope>
    <source>
        <strain>Fw109-5</strain>
    </source>
</reference>
<gene>
    <name evidence="1" type="primary">fabZ</name>
    <name type="ordered locus">Anae109_1123</name>
</gene>
<organism>
    <name type="scientific">Anaeromyxobacter sp. (strain Fw109-5)</name>
    <dbReference type="NCBI Taxonomy" id="404589"/>
    <lineage>
        <taxon>Bacteria</taxon>
        <taxon>Pseudomonadati</taxon>
        <taxon>Myxococcota</taxon>
        <taxon>Myxococcia</taxon>
        <taxon>Myxococcales</taxon>
        <taxon>Cystobacterineae</taxon>
        <taxon>Anaeromyxobacteraceae</taxon>
        <taxon>Anaeromyxobacter</taxon>
    </lineage>
</organism>
<dbReference type="EC" id="4.2.1.59" evidence="1"/>
<dbReference type="EMBL" id="CP000769">
    <property type="protein sequence ID" value="ABS25331.1"/>
    <property type="molecule type" value="Genomic_DNA"/>
</dbReference>
<dbReference type="SMR" id="A7H9D5"/>
<dbReference type="STRING" id="404589.Anae109_1123"/>
<dbReference type="KEGG" id="afw:Anae109_1123"/>
<dbReference type="eggNOG" id="COG0764">
    <property type="taxonomic scope" value="Bacteria"/>
</dbReference>
<dbReference type="HOGENOM" id="CLU_078912_1_0_7"/>
<dbReference type="Proteomes" id="UP000006382">
    <property type="component" value="Chromosome"/>
</dbReference>
<dbReference type="GO" id="GO:0005737">
    <property type="term" value="C:cytoplasm"/>
    <property type="evidence" value="ECO:0007669"/>
    <property type="project" value="UniProtKB-SubCell"/>
</dbReference>
<dbReference type="GO" id="GO:0016020">
    <property type="term" value="C:membrane"/>
    <property type="evidence" value="ECO:0007669"/>
    <property type="project" value="GOC"/>
</dbReference>
<dbReference type="GO" id="GO:0019171">
    <property type="term" value="F:(3R)-hydroxyacyl-[acyl-carrier-protein] dehydratase activity"/>
    <property type="evidence" value="ECO:0007669"/>
    <property type="project" value="UniProtKB-EC"/>
</dbReference>
<dbReference type="GO" id="GO:0006633">
    <property type="term" value="P:fatty acid biosynthetic process"/>
    <property type="evidence" value="ECO:0007669"/>
    <property type="project" value="UniProtKB-UniRule"/>
</dbReference>
<dbReference type="GO" id="GO:0009245">
    <property type="term" value="P:lipid A biosynthetic process"/>
    <property type="evidence" value="ECO:0007669"/>
    <property type="project" value="UniProtKB-UniRule"/>
</dbReference>
<dbReference type="CDD" id="cd01288">
    <property type="entry name" value="FabZ"/>
    <property type="match status" value="1"/>
</dbReference>
<dbReference type="FunFam" id="3.10.129.10:FF:000001">
    <property type="entry name" value="3-hydroxyacyl-[acyl-carrier-protein] dehydratase FabZ"/>
    <property type="match status" value="1"/>
</dbReference>
<dbReference type="Gene3D" id="3.10.129.10">
    <property type="entry name" value="Hotdog Thioesterase"/>
    <property type="match status" value="1"/>
</dbReference>
<dbReference type="HAMAP" id="MF_00406">
    <property type="entry name" value="FabZ"/>
    <property type="match status" value="1"/>
</dbReference>
<dbReference type="InterPro" id="IPR013114">
    <property type="entry name" value="FabA_FabZ"/>
</dbReference>
<dbReference type="InterPro" id="IPR010084">
    <property type="entry name" value="FabZ"/>
</dbReference>
<dbReference type="InterPro" id="IPR029069">
    <property type="entry name" value="HotDog_dom_sf"/>
</dbReference>
<dbReference type="NCBIfam" id="TIGR01750">
    <property type="entry name" value="fabZ"/>
    <property type="match status" value="1"/>
</dbReference>
<dbReference type="NCBIfam" id="NF000582">
    <property type="entry name" value="PRK00006.1"/>
    <property type="match status" value="1"/>
</dbReference>
<dbReference type="PANTHER" id="PTHR30272">
    <property type="entry name" value="3-HYDROXYACYL-[ACYL-CARRIER-PROTEIN] DEHYDRATASE"/>
    <property type="match status" value="1"/>
</dbReference>
<dbReference type="PANTHER" id="PTHR30272:SF1">
    <property type="entry name" value="3-HYDROXYACYL-[ACYL-CARRIER-PROTEIN] DEHYDRATASE"/>
    <property type="match status" value="1"/>
</dbReference>
<dbReference type="Pfam" id="PF07977">
    <property type="entry name" value="FabA"/>
    <property type="match status" value="1"/>
</dbReference>
<dbReference type="SUPFAM" id="SSF54637">
    <property type="entry name" value="Thioesterase/thiol ester dehydrase-isomerase"/>
    <property type="match status" value="1"/>
</dbReference>
<protein>
    <recommendedName>
        <fullName evidence="1">3-hydroxyacyl-[acyl-carrier-protein] dehydratase FabZ</fullName>
        <ecNumber evidence="1">4.2.1.59</ecNumber>
    </recommendedName>
    <alternativeName>
        <fullName evidence="1">(3R)-hydroxymyristoyl-[acyl-carrier-protein] dehydratase</fullName>
        <shortName evidence="1">(3R)-hydroxymyristoyl-ACP dehydrase</shortName>
    </alternativeName>
    <alternativeName>
        <fullName evidence="1">Beta-hydroxyacyl-ACP dehydratase</fullName>
    </alternativeName>
</protein>
<feature type="chain" id="PRO_1000049832" description="3-hydroxyacyl-[acyl-carrier-protein] dehydratase FabZ">
    <location>
        <begin position="1"/>
        <end position="158"/>
    </location>
</feature>
<feature type="active site" evidence="1">
    <location>
        <position position="57"/>
    </location>
</feature>
<accession>A7H9D5</accession>
<proteinExistence type="inferred from homology"/>
<sequence>MSAERASAPVMDVEAIQRILPHRPPFLLVDRVVAVEPGVRLVAWKSVTMNEPFFVGHFPGKPVMPGVLILEALAQACALLAVKSMGPDEDVDEKITYLMSIDGAKFRRPVVPGDRLELHVEVVKRKGAIWRQKGTAIVDGQTVAEADFMAMLADREQE</sequence>